<dbReference type="EC" id="5.1.1.1"/>
<dbReference type="EMBL" id="AL513382">
    <property type="protein sequence ID" value="CAD09231.1"/>
    <property type="molecule type" value="Genomic_DNA"/>
</dbReference>
<dbReference type="EMBL" id="AE014613">
    <property type="protein sequence ID" value="AAO71617.1"/>
    <property type="molecule type" value="Genomic_DNA"/>
</dbReference>
<dbReference type="RefSeq" id="NP_458545.1">
    <property type="nucleotide sequence ID" value="NC_003198.1"/>
</dbReference>
<dbReference type="RefSeq" id="WP_001147297.1">
    <property type="nucleotide sequence ID" value="NZ_WSUR01000027.1"/>
</dbReference>
<dbReference type="SMR" id="P0A1A4"/>
<dbReference type="STRING" id="220341.gene:17588275"/>
<dbReference type="KEGG" id="stt:t4153"/>
<dbReference type="KEGG" id="sty:STY4443"/>
<dbReference type="PATRIC" id="fig|220341.7.peg.4543"/>
<dbReference type="eggNOG" id="COG0787">
    <property type="taxonomic scope" value="Bacteria"/>
</dbReference>
<dbReference type="HOGENOM" id="CLU_028393_1_0_6"/>
<dbReference type="OMA" id="WEILCGF"/>
<dbReference type="OrthoDB" id="9813814at2"/>
<dbReference type="UniPathway" id="UPA00042">
    <property type="reaction ID" value="UER00497"/>
</dbReference>
<dbReference type="UniPathway" id="UPA00219"/>
<dbReference type="Proteomes" id="UP000000541">
    <property type="component" value="Chromosome"/>
</dbReference>
<dbReference type="Proteomes" id="UP000002670">
    <property type="component" value="Chromosome"/>
</dbReference>
<dbReference type="GO" id="GO:0005829">
    <property type="term" value="C:cytosol"/>
    <property type="evidence" value="ECO:0007669"/>
    <property type="project" value="TreeGrafter"/>
</dbReference>
<dbReference type="GO" id="GO:0008784">
    <property type="term" value="F:alanine racemase activity"/>
    <property type="evidence" value="ECO:0007669"/>
    <property type="project" value="UniProtKB-UniRule"/>
</dbReference>
<dbReference type="GO" id="GO:0030170">
    <property type="term" value="F:pyridoxal phosphate binding"/>
    <property type="evidence" value="ECO:0007669"/>
    <property type="project" value="UniProtKB-UniRule"/>
</dbReference>
<dbReference type="GO" id="GO:0071555">
    <property type="term" value="P:cell wall organization"/>
    <property type="evidence" value="ECO:0007669"/>
    <property type="project" value="UniProtKB-KW"/>
</dbReference>
<dbReference type="GO" id="GO:0030632">
    <property type="term" value="P:D-alanine biosynthetic process"/>
    <property type="evidence" value="ECO:0007669"/>
    <property type="project" value="UniProtKB-UniRule"/>
</dbReference>
<dbReference type="GO" id="GO:0009252">
    <property type="term" value="P:peptidoglycan biosynthetic process"/>
    <property type="evidence" value="ECO:0007669"/>
    <property type="project" value="UniProtKB-UniPathway"/>
</dbReference>
<dbReference type="GO" id="GO:0008360">
    <property type="term" value="P:regulation of cell shape"/>
    <property type="evidence" value="ECO:0007669"/>
    <property type="project" value="UniProtKB-KW"/>
</dbReference>
<dbReference type="CDD" id="cd06827">
    <property type="entry name" value="PLPDE_III_AR_proteobact"/>
    <property type="match status" value="1"/>
</dbReference>
<dbReference type="FunFam" id="2.40.37.10:FF:000002">
    <property type="entry name" value="Alanine racemase"/>
    <property type="match status" value="1"/>
</dbReference>
<dbReference type="FunFam" id="3.20.20.10:FF:000002">
    <property type="entry name" value="Alanine racemase"/>
    <property type="match status" value="1"/>
</dbReference>
<dbReference type="Gene3D" id="3.20.20.10">
    <property type="entry name" value="Alanine racemase"/>
    <property type="match status" value="1"/>
</dbReference>
<dbReference type="Gene3D" id="2.40.37.10">
    <property type="entry name" value="Lyase, Ornithine Decarboxylase, Chain A, domain 1"/>
    <property type="match status" value="1"/>
</dbReference>
<dbReference type="HAMAP" id="MF_01201">
    <property type="entry name" value="Ala_racemase"/>
    <property type="match status" value="1"/>
</dbReference>
<dbReference type="InterPro" id="IPR000821">
    <property type="entry name" value="Ala_racemase"/>
</dbReference>
<dbReference type="InterPro" id="IPR009006">
    <property type="entry name" value="Ala_racemase/Decarboxylase_C"/>
</dbReference>
<dbReference type="InterPro" id="IPR011079">
    <property type="entry name" value="Ala_racemase_C"/>
</dbReference>
<dbReference type="InterPro" id="IPR001608">
    <property type="entry name" value="Ala_racemase_N"/>
</dbReference>
<dbReference type="InterPro" id="IPR020622">
    <property type="entry name" value="Ala_racemase_pyridoxalP-BS"/>
</dbReference>
<dbReference type="InterPro" id="IPR029066">
    <property type="entry name" value="PLP-binding_barrel"/>
</dbReference>
<dbReference type="NCBIfam" id="TIGR00492">
    <property type="entry name" value="alr"/>
    <property type="match status" value="1"/>
</dbReference>
<dbReference type="PANTHER" id="PTHR30511">
    <property type="entry name" value="ALANINE RACEMASE"/>
    <property type="match status" value="1"/>
</dbReference>
<dbReference type="PANTHER" id="PTHR30511:SF4">
    <property type="entry name" value="ALANINE RACEMASE, BIOSYNTHETIC"/>
    <property type="match status" value="1"/>
</dbReference>
<dbReference type="Pfam" id="PF00842">
    <property type="entry name" value="Ala_racemase_C"/>
    <property type="match status" value="1"/>
</dbReference>
<dbReference type="Pfam" id="PF01168">
    <property type="entry name" value="Ala_racemase_N"/>
    <property type="match status" value="1"/>
</dbReference>
<dbReference type="PRINTS" id="PR00992">
    <property type="entry name" value="ALARACEMASE"/>
</dbReference>
<dbReference type="SMART" id="SM01005">
    <property type="entry name" value="Ala_racemase_C"/>
    <property type="match status" value="1"/>
</dbReference>
<dbReference type="SUPFAM" id="SSF50621">
    <property type="entry name" value="Alanine racemase C-terminal domain-like"/>
    <property type="match status" value="1"/>
</dbReference>
<dbReference type="SUPFAM" id="SSF51419">
    <property type="entry name" value="PLP-binding barrel"/>
    <property type="match status" value="1"/>
</dbReference>
<dbReference type="PROSITE" id="PS00395">
    <property type="entry name" value="ALANINE_RACEMASE"/>
    <property type="match status" value="1"/>
</dbReference>
<organism>
    <name type="scientific">Salmonella typhi</name>
    <dbReference type="NCBI Taxonomy" id="90370"/>
    <lineage>
        <taxon>Bacteria</taxon>
        <taxon>Pseudomonadati</taxon>
        <taxon>Pseudomonadota</taxon>
        <taxon>Gammaproteobacteria</taxon>
        <taxon>Enterobacterales</taxon>
        <taxon>Enterobacteriaceae</taxon>
        <taxon>Salmonella</taxon>
    </lineage>
</organism>
<feature type="chain" id="PRO_0000114558" description="Alanine racemase, biosynthetic">
    <location>
        <begin position="1"/>
        <end position="359"/>
    </location>
</feature>
<feature type="active site" description="Proton acceptor; specific for D-alanine" evidence="1">
    <location>
        <position position="34"/>
    </location>
</feature>
<feature type="active site" description="Proton acceptor; specific for L-alanine" evidence="1">
    <location>
        <position position="255"/>
    </location>
</feature>
<feature type="binding site" evidence="1">
    <location>
        <position position="129"/>
    </location>
    <ligand>
        <name>substrate</name>
    </ligand>
</feature>
<feature type="binding site" evidence="1">
    <location>
        <position position="303"/>
    </location>
    <ligand>
        <name>substrate</name>
    </ligand>
</feature>
<feature type="modified residue" description="N6-(pyridoxal phosphate)lysine">
    <location>
        <position position="34"/>
    </location>
</feature>
<comment type="function">
    <text evidence="1">Catalyzes the interconversion of L-alanine and D-alanine. Provides the D-alanine required for cell wall biosynthesis (By similarity).</text>
</comment>
<comment type="catalytic activity">
    <reaction>
        <text>L-alanine = D-alanine</text>
        <dbReference type="Rhea" id="RHEA:20249"/>
        <dbReference type="ChEBI" id="CHEBI:57416"/>
        <dbReference type="ChEBI" id="CHEBI:57972"/>
        <dbReference type="EC" id="5.1.1.1"/>
    </reaction>
</comment>
<comment type="cofactor">
    <cofactor evidence="1">
        <name>pyridoxal 5'-phosphate</name>
        <dbReference type="ChEBI" id="CHEBI:597326"/>
    </cofactor>
</comment>
<comment type="pathway">
    <text>Amino-acid biosynthesis; D-alanine biosynthesis; D-alanine from L-alanine: step 1/1.</text>
</comment>
<comment type="pathway">
    <text>Cell wall biogenesis; peptidoglycan biosynthesis.</text>
</comment>
<comment type="similarity">
    <text evidence="2">Belongs to the alanine racemase family.</text>
</comment>
<evidence type="ECO:0000250" key="1"/>
<evidence type="ECO:0000305" key="2"/>
<gene>
    <name type="primary">alr</name>
    <name type="ordered locus">STY4443</name>
    <name type="ordered locus">t4153</name>
</gene>
<proteinExistence type="evidence at protein level"/>
<reference key="1">
    <citation type="journal article" date="2001" name="Nature">
        <title>Complete genome sequence of a multiple drug resistant Salmonella enterica serovar Typhi CT18.</title>
        <authorList>
            <person name="Parkhill J."/>
            <person name="Dougan G."/>
            <person name="James K.D."/>
            <person name="Thomson N.R."/>
            <person name="Pickard D."/>
            <person name="Wain J."/>
            <person name="Churcher C.M."/>
            <person name="Mungall K.L."/>
            <person name="Bentley S.D."/>
            <person name="Holden M.T.G."/>
            <person name="Sebaihia M."/>
            <person name="Baker S."/>
            <person name="Basham D."/>
            <person name="Brooks K."/>
            <person name="Chillingworth T."/>
            <person name="Connerton P."/>
            <person name="Cronin A."/>
            <person name="Davis P."/>
            <person name="Davies R.M."/>
            <person name="Dowd L."/>
            <person name="White N."/>
            <person name="Farrar J."/>
            <person name="Feltwell T."/>
            <person name="Hamlin N."/>
            <person name="Haque A."/>
            <person name="Hien T.T."/>
            <person name="Holroyd S."/>
            <person name="Jagels K."/>
            <person name="Krogh A."/>
            <person name="Larsen T.S."/>
            <person name="Leather S."/>
            <person name="Moule S."/>
            <person name="O'Gaora P."/>
            <person name="Parry C."/>
            <person name="Quail M.A."/>
            <person name="Rutherford K.M."/>
            <person name="Simmonds M."/>
            <person name="Skelton J."/>
            <person name="Stevens K."/>
            <person name="Whitehead S."/>
            <person name="Barrell B.G."/>
        </authorList>
    </citation>
    <scope>NUCLEOTIDE SEQUENCE [LARGE SCALE GENOMIC DNA]</scope>
    <source>
        <strain>CT18</strain>
    </source>
</reference>
<reference key="2">
    <citation type="journal article" date="2003" name="J. Bacteriol.">
        <title>Comparative genomics of Salmonella enterica serovar Typhi strains Ty2 and CT18.</title>
        <authorList>
            <person name="Deng W."/>
            <person name="Liou S.-R."/>
            <person name="Plunkett G. III"/>
            <person name="Mayhew G.F."/>
            <person name="Rose D.J."/>
            <person name="Burland V."/>
            <person name="Kodoyianni V."/>
            <person name="Schwartz D.C."/>
            <person name="Blattner F.R."/>
        </authorList>
    </citation>
    <scope>NUCLEOTIDE SEQUENCE [LARGE SCALE GENOMIC DNA]</scope>
    <source>
        <strain>ATCC 700931 / Ty2</strain>
    </source>
</reference>
<name>ALR1_SALTI</name>
<accession>P0A1A4</accession>
<accession>P06655</accession>
<protein>
    <recommendedName>
        <fullName>Alanine racemase, biosynthetic</fullName>
        <ecNumber>5.1.1.1</ecNumber>
    </recommendedName>
</protein>
<keyword id="KW-0133">Cell shape</keyword>
<keyword id="KW-0961">Cell wall biogenesis/degradation</keyword>
<keyword id="KW-0413">Isomerase</keyword>
<keyword id="KW-0573">Peptidoglycan synthesis</keyword>
<keyword id="KW-0663">Pyridoxal phosphate</keyword>
<sequence>MQAATVVINRRALRHNLQRLRELAPASKLVAVVKANAYGHGLLETARTLPDADAFGVARLEEALRLRAGGITQPILLLEGFFDAADLPTISAQCLHTAVHNQEQLAALEAVELAEPVTVWMKLDTGMHRLGVRPEEAEAFYQRLTHCKNVRQPVNIVSHFARADEPECGATEHQLDIFNAFCQGKPGQRSIAASGGILLWPQSHFDWARPGIILYGVSPLEHKPWGPDFGFQPVMSLTSSLIAVRDHKAGEPVGYGGTWVSERDTRLGVVAMGYGDGYPRAAPSGTPVLVNGREVPIVGRVAMDMICVDLGPNAQDNAGDPVVLWGEGLPVERIAEMTKVSAYELITRLTSRVAMKYID</sequence>